<organism>
    <name type="scientific">Xenopus laevis</name>
    <name type="common">African clawed frog</name>
    <dbReference type="NCBI Taxonomy" id="8355"/>
    <lineage>
        <taxon>Eukaryota</taxon>
        <taxon>Metazoa</taxon>
        <taxon>Chordata</taxon>
        <taxon>Craniata</taxon>
        <taxon>Vertebrata</taxon>
        <taxon>Euteleostomi</taxon>
        <taxon>Amphibia</taxon>
        <taxon>Batrachia</taxon>
        <taxon>Anura</taxon>
        <taxon>Pipoidea</taxon>
        <taxon>Pipidae</taxon>
        <taxon>Xenopodinae</taxon>
        <taxon>Xenopus</taxon>
        <taxon>Xenopus</taxon>
    </lineage>
</organism>
<proteinExistence type="evidence at transcript level"/>
<accession>P12226</accession>
<sequence>MAAGSITTLPTESEDGGNTPFSPGSFKDPKRLYCKNGGFFLRINSDGRVDGSRDKSDSHIKLQLQAVERGVVSIKGITANRYLAMKEDGRLTSLRCITDECFFFERLEANNYNTYRSRKYSSWYVALKRTGQYKNGSSTGPGQKAILFLPMSAKS</sequence>
<protein>
    <recommendedName>
        <fullName>Fibroblast growth factor 2</fullName>
        <shortName>FGF-2</shortName>
    </recommendedName>
    <alternativeName>
        <fullName>Basic fibroblast growth factor</fullName>
        <shortName>bFGF</shortName>
    </alternativeName>
    <alternativeName>
        <fullName>Heparin-binding growth factor 2</fullName>
        <shortName>HBGF-2</shortName>
    </alternativeName>
</protein>
<dbReference type="EMBL" id="M18067">
    <property type="protein sequence ID" value="AAA49726.1"/>
    <property type="molecule type" value="mRNA"/>
</dbReference>
<dbReference type="PIR" id="A40117">
    <property type="entry name" value="A40117"/>
</dbReference>
<dbReference type="RefSeq" id="NP_001093341.1">
    <property type="nucleotide sequence ID" value="NM_001099871.1"/>
</dbReference>
<dbReference type="SMR" id="P12226"/>
<dbReference type="GeneID" id="100101279"/>
<dbReference type="KEGG" id="xla:100101279"/>
<dbReference type="AGR" id="Xenbase:XB-GENE-487006"/>
<dbReference type="CTD" id="100101279"/>
<dbReference type="Xenbase" id="XB-GENE-487006">
    <property type="gene designation" value="fgf2.L"/>
</dbReference>
<dbReference type="OMA" id="KGVCSNR"/>
<dbReference type="OrthoDB" id="5987799at2759"/>
<dbReference type="Proteomes" id="UP000186698">
    <property type="component" value="Chromosome 1L"/>
</dbReference>
<dbReference type="Bgee" id="100101279">
    <property type="expression patterns" value="Expressed in internal ear and 17 other cell types or tissues"/>
</dbReference>
<dbReference type="GO" id="GO:0005737">
    <property type="term" value="C:cytoplasm"/>
    <property type="evidence" value="ECO:0000318"/>
    <property type="project" value="GO_Central"/>
</dbReference>
<dbReference type="GO" id="GO:0005615">
    <property type="term" value="C:extracellular space"/>
    <property type="evidence" value="ECO:0000318"/>
    <property type="project" value="GO_Central"/>
</dbReference>
<dbReference type="GO" id="GO:0005634">
    <property type="term" value="C:nucleus"/>
    <property type="evidence" value="ECO:0000318"/>
    <property type="project" value="GO_Central"/>
</dbReference>
<dbReference type="GO" id="GO:0005104">
    <property type="term" value="F:fibroblast growth factor receptor binding"/>
    <property type="evidence" value="ECO:0000318"/>
    <property type="project" value="GO_Central"/>
</dbReference>
<dbReference type="GO" id="GO:0008083">
    <property type="term" value="F:growth factor activity"/>
    <property type="evidence" value="ECO:0000318"/>
    <property type="project" value="GO_Central"/>
</dbReference>
<dbReference type="GO" id="GO:0008201">
    <property type="term" value="F:heparin binding"/>
    <property type="evidence" value="ECO:0007669"/>
    <property type="project" value="UniProtKB-KW"/>
</dbReference>
<dbReference type="GO" id="GO:0005178">
    <property type="term" value="F:integrin binding"/>
    <property type="evidence" value="ECO:0000250"/>
    <property type="project" value="UniProtKB"/>
</dbReference>
<dbReference type="GO" id="GO:0001525">
    <property type="term" value="P:angiogenesis"/>
    <property type="evidence" value="ECO:0007669"/>
    <property type="project" value="UniProtKB-KW"/>
</dbReference>
<dbReference type="GO" id="GO:0021533">
    <property type="term" value="P:cell differentiation in hindbrain"/>
    <property type="evidence" value="ECO:0000314"/>
    <property type="project" value="BHF-UCL"/>
</dbReference>
<dbReference type="GO" id="GO:0008543">
    <property type="term" value="P:fibroblast growth factor receptor signaling pathway"/>
    <property type="evidence" value="ECO:0000314"/>
    <property type="project" value="BHF-UCL"/>
</dbReference>
<dbReference type="GO" id="GO:0007498">
    <property type="term" value="P:mesoderm development"/>
    <property type="evidence" value="ECO:0000314"/>
    <property type="project" value="BHF-UCL"/>
</dbReference>
<dbReference type="GO" id="GO:0030901">
    <property type="term" value="P:midbrain development"/>
    <property type="evidence" value="ECO:0000314"/>
    <property type="project" value="Xenbase"/>
</dbReference>
<dbReference type="GO" id="GO:0007399">
    <property type="term" value="P:nervous system development"/>
    <property type="evidence" value="ECO:0000314"/>
    <property type="project" value="BHF-UCL"/>
</dbReference>
<dbReference type="GO" id="GO:0021999">
    <property type="term" value="P:neural plate anterior/posterior regionalization"/>
    <property type="evidence" value="ECO:0000314"/>
    <property type="project" value="BHF-UCL"/>
</dbReference>
<dbReference type="GO" id="GO:0061351">
    <property type="term" value="P:neural precursor cell proliferation"/>
    <property type="evidence" value="ECO:0000315"/>
    <property type="project" value="Xenbase"/>
</dbReference>
<dbReference type="GO" id="GO:0022008">
    <property type="term" value="P:neurogenesis"/>
    <property type="evidence" value="ECO:0000318"/>
    <property type="project" value="GO_Central"/>
</dbReference>
<dbReference type="GO" id="GO:0045766">
    <property type="term" value="P:positive regulation of angiogenesis"/>
    <property type="evidence" value="ECO:0000250"/>
    <property type="project" value="UniProtKB"/>
</dbReference>
<dbReference type="GO" id="GO:0043536">
    <property type="term" value="P:positive regulation of blood vessel endothelial cell migration"/>
    <property type="evidence" value="ECO:0000250"/>
    <property type="project" value="UniProtKB"/>
</dbReference>
<dbReference type="GO" id="GO:0051781">
    <property type="term" value="P:positive regulation of cell division"/>
    <property type="evidence" value="ECO:0007669"/>
    <property type="project" value="UniProtKB-KW"/>
</dbReference>
<dbReference type="GO" id="GO:0090050">
    <property type="term" value="P:positive regulation of cell migration involved in sprouting angiogenesis"/>
    <property type="evidence" value="ECO:0000250"/>
    <property type="project" value="UniProtKB"/>
</dbReference>
<dbReference type="GO" id="GO:0008284">
    <property type="term" value="P:positive regulation of cell population proliferation"/>
    <property type="evidence" value="ECO:0000318"/>
    <property type="project" value="GO_Central"/>
</dbReference>
<dbReference type="GO" id="GO:0043410">
    <property type="term" value="P:positive regulation of MAPK cascade"/>
    <property type="evidence" value="ECO:0000318"/>
    <property type="project" value="GO_Central"/>
</dbReference>
<dbReference type="GO" id="GO:0030334">
    <property type="term" value="P:regulation of cell migration"/>
    <property type="evidence" value="ECO:0000318"/>
    <property type="project" value="GO_Central"/>
</dbReference>
<dbReference type="CDD" id="cd23314">
    <property type="entry name" value="beta-trefoil_FGF2"/>
    <property type="match status" value="1"/>
</dbReference>
<dbReference type="FunFam" id="2.80.10.50:FF:000020">
    <property type="entry name" value="Fibroblast growth factor 1"/>
    <property type="match status" value="1"/>
</dbReference>
<dbReference type="Gene3D" id="2.80.10.50">
    <property type="match status" value="1"/>
</dbReference>
<dbReference type="InterPro" id="IPR002209">
    <property type="entry name" value="Fibroblast_GF_fam"/>
</dbReference>
<dbReference type="InterPro" id="IPR008996">
    <property type="entry name" value="IL1/FGF"/>
</dbReference>
<dbReference type="PANTHER" id="PTHR11486">
    <property type="entry name" value="FIBROBLAST GROWTH FACTOR"/>
    <property type="match status" value="1"/>
</dbReference>
<dbReference type="Pfam" id="PF00167">
    <property type="entry name" value="FGF"/>
    <property type="match status" value="1"/>
</dbReference>
<dbReference type="PRINTS" id="PR00263">
    <property type="entry name" value="HBGFFGF"/>
</dbReference>
<dbReference type="PRINTS" id="PR00262">
    <property type="entry name" value="IL1HBGF"/>
</dbReference>
<dbReference type="SMART" id="SM00442">
    <property type="entry name" value="FGF"/>
    <property type="match status" value="1"/>
</dbReference>
<dbReference type="SUPFAM" id="SSF50353">
    <property type="entry name" value="Cytokine"/>
    <property type="match status" value="1"/>
</dbReference>
<dbReference type="PROSITE" id="PS00247">
    <property type="entry name" value="HBGF_FGF"/>
    <property type="match status" value="1"/>
</dbReference>
<feature type="propeptide" id="PRO_0000008944">
    <location>
        <begin position="1"/>
        <end position="9"/>
    </location>
</feature>
<feature type="chain" id="PRO_0000008945" description="Fibroblast growth factor 2">
    <location>
        <begin position="10"/>
        <end position="155"/>
    </location>
</feature>
<feature type="region of interest" description="Disordered" evidence="3">
    <location>
        <begin position="1"/>
        <end position="24"/>
    </location>
</feature>
<feature type="compositionally biased region" description="Polar residues" evidence="3">
    <location>
        <begin position="1"/>
        <end position="11"/>
    </location>
</feature>
<feature type="binding site" evidence="2">
    <location>
        <begin position="27"/>
        <end position="31"/>
    </location>
    <ligand>
        <name>heparin</name>
        <dbReference type="ChEBI" id="CHEBI:28304"/>
    </ligand>
</feature>
<feature type="binding site" evidence="2">
    <location>
        <begin position="116"/>
        <end position="119"/>
    </location>
    <ligand>
        <name>heparin</name>
        <dbReference type="ChEBI" id="CHEBI:28304"/>
    </ligand>
</feature>
<feature type="site" description="Important for interaction with integrin" evidence="1">
    <location>
        <position position="128"/>
    </location>
</feature>
<feature type="site" description="Important for interaction with integrin" evidence="1">
    <location>
        <position position="129"/>
    </location>
</feature>
<feature type="site" description="Important for interaction with integrin" evidence="1">
    <location>
        <position position="134"/>
    </location>
</feature>
<feature type="sequence conflict" description="In Ref. 2; no nucleotide entry." evidence="4" ref="2">
    <location>
        <position position="111"/>
    </location>
</feature>
<comment type="function">
    <text evidence="1">Acts as a ligand for FGFR1, FGFR2, FGFR3 and FGFR4 (By similarity). Also acts as an integrin ligand which is required for FGF2 signaling (By similarity). Plays an important role in the regulation of cell survival, cell division, cell differentiation and cell migration (By similarity). Functions as a potent mitogen in vitro. Can induce angiogenesis (By similarity).</text>
</comment>
<comment type="subcellular location">
    <subcellularLocation>
        <location evidence="1">Secreted</location>
    </subcellularLocation>
    <subcellularLocation>
        <location evidence="1">Nucleus</location>
    </subcellularLocation>
    <text evidence="1">Exported from cells by an endoplasmic reticulum (ER)/Golgi-independent mechanism. Unconventional secretion of FGF2 occurs by direct translocation across the plasma membrane (By similarity). Binding of exogenous FGF2 to FGFR facilitates endocytosis followed by translocation of FGF2 across endosomal membrane into the cytosol (By similarity). Nuclear import from the cytosol requires the classical nuclear import machinery (By similarity).</text>
</comment>
<comment type="similarity">
    <text evidence="4">Belongs to the heparin-binding growth factors family.</text>
</comment>
<name>FGF2_XENLA</name>
<keyword id="KW-0037">Angiogenesis</keyword>
<keyword id="KW-0217">Developmental protein</keyword>
<keyword id="KW-0221">Differentiation</keyword>
<keyword id="KW-0339">Growth factor</keyword>
<keyword id="KW-0358">Heparin-binding</keyword>
<keyword id="KW-0497">Mitogen</keyword>
<keyword id="KW-0539">Nucleus</keyword>
<keyword id="KW-1185">Reference proteome</keyword>
<keyword id="KW-0964">Secreted</keyword>
<evidence type="ECO:0000250" key="1">
    <source>
        <dbReference type="UniProtKB" id="P09038"/>
    </source>
</evidence>
<evidence type="ECO:0000255" key="2"/>
<evidence type="ECO:0000256" key="3">
    <source>
        <dbReference type="SAM" id="MobiDB-lite"/>
    </source>
</evidence>
<evidence type="ECO:0000305" key="4"/>
<reference key="1">
    <citation type="journal article" date="1988" name="Science">
        <title>The presence of fibroblast growth factor in the frog egg: its role as a natural mesoderm inducer.</title>
        <authorList>
            <person name="Kimelman D."/>
            <person name="Abraham J."/>
            <person name="Haaparanta T."/>
            <person name="Palisi T."/>
            <person name="Kirschner M."/>
        </authorList>
    </citation>
    <scope>NUCLEOTIDE SEQUENCE [MRNA]</scope>
</reference>
<reference key="2">
    <citation type="journal article" date="1987" name="Cell">
        <title>Synergistic induction of mesoderm by FGF and TGF-beta and the identification of an mRNA coding for FGF in the early Xenopus embryo.</title>
        <authorList>
            <person name="Kimelman D."/>
            <person name="Kirschner M."/>
        </authorList>
    </citation>
    <scope>NUCLEOTIDE SEQUENCE [MRNA] OF 95-155</scope>
</reference>
<gene>
    <name type="primary">fgf2</name>
    <name type="synonym">fgf-2</name>
</gene>